<keyword id="KW-0997">Cell inner membrane</keyword>
<keyword id="KW-1003">Cell membrane</keyword>
<keyword id="KW-0472">Membrane</keyword>
<keyword id="KW-1185">Reference proteome</keyword>
<keyword id="KW-0812">Transmembrane</keyword>
<keyword id="KW-1133">Transmembrane helix</keyword>
<keyword id="KW-0813">Transport</keyword>
<accession>A9MRT8</accession>
<sequence length="109" mass="11662">MQQFEWVHGAWLALAIILEIAANVLLKFSDGFRRKCYGILSLAAVLAAFSALSQAVKGIDLSVAYALWGGFGIAATLAAGWVLFGQRLNPKGWVGVVLLLVGMIMIKLA</sequence>
<reference key="1">
    <citation type="submission" date="2007-11" db="EMBL/GenBank/DDBJ databases">
        <authorList>
            <consortium name="The Salmonella enterica serovar Arizonae Genome Sequencing Project"/>
            <person name="McClelland M."/>
            <person name="Sanderson E.K."/>
            <person name="Porwollik S."/>
            <person name="Spieth J."/>
            <person name="Clifton W.S."/>
            <person name="Fulton R."/>
            <person name="Chunyan W."/>
            <person name="Wollam A."/>
            <person name="Shah N."/>
            <person name="Pepin K."/>
            <person name="Bhonagiri V."/>
            <person name="Nash W."/>
            <person name="Johnson M."/>
            <person name="Thiruvilangam P."/>
            <person name="Wilson R."/>
        </authorList>
    </citation>
    <scope>NUCLEOTIDE SEQUENCE [LARGE SCALE GENOMIC DNA]</scope>
    <source>
        <strain>ATCC BAA-731 / CDC346-86 / RSK2980</strain>
    </source>
</reference>
<organism>
    <name type="scientific">Salmonella arizonae (strain ATCC BAA-731 / CDC346-86 / RSK2980)</name>
    <dbReference type="NCBI Taxonomy" id="41514"/>
    <lineage>
        <taxon>Bacteria</taxon>
        <taxon>Pseudomonadati</taxon>
        <taxon>Pseudomonadota</taxon>
        <taxon>Gammaproteobacteria</taxon>
        <taxon>Enterobacterales</taxon>
        <taxon>Enterobacteriaceae</taxon>
        <taxon>Salmonella</taxon>
    </lineage>
</organism>
<proteinExistence type="inferred from homology"/>
<gene>
    <name evidence="1" type="primary">mdtI</name>
    <name type="ordered locus">SARI_01495</name>
</gene>
<evidence type="ECO:0000255" key="1">
    <source>
        <dbReference type="HAMAP-Rule" id="MF_01597"/>
    </source>
</evidence>
<comment type="function">
    <text evidence="1">Catalyzes the excretion of spermidine.</text>
</comment>
<comment type="subunit">
    <text evidence="1">Forms a complex with MdtJ.</text>
</comment>
<comment type="subcellular location">
    <subcellularLocation>
        <location evidence="1">Cell inner membrane</location>
        <topology evidence="1">Multi-pass membrane protein</topology>
    </subcellularLocation>
</comment>
<comment type="similarity">
    <text evidence="1">Belongs to the drug/metabolite transporter (DMT) superfamily. Small multidrug resistance (SMR) (TC 2.A.7.1) family. MdtI subfamily.</text>
</comment>
<protein>
    <recommendedName>
        <fullName evidence="1">Spermidine export protein MdtI</fullName>
    </recommendedName>
</protein>
<dbReference type="EMBL" id="CP000880">
    <property type="protein sequence ID" value="ABX21391.1"/>
    <property type="molecule type" value="Genomic_DNA"/>
</dbReference>
<dbReference type="SMR" id="A9MRT8"/>
<dbReference type="STRING" id="41514.SARI_01495"/>
<dbReference type="KEGG" id="ses:SARI_01495"/>
<dbReference type="HOGENOM" id="CLU_133067_0_4_6"/>
<dbReference type="Proteomes" id="UP000002084">
    <property type="component" value="Chromosome"/>
</dbReference>
<dbReference type="GO" id="GO:0005886">
    <property type="term" value="C:plasma membrane"/>
    <property type="evidence" value="ECO:0007669"/>
    <property type="project" value="UniProtKB-SubCell"/>
</dbReference>
<dbReference type="GO" id="GO:0015199">
    <property type="term" value="F:amino-acid betaine transmembrane transporter activity"/>
    <property type="evidence" value="ECO:0007669"/>
    <property type="project" value="TreeGrafter"/>
</dbReference>
<dbReference type="GO" id="GO:0015297">
    <property type="term" value="F:antiporter activity"/>
    <property type="evidence" value="ECO:0007669"/>
    <property type="project" value="TreeGrafter"/>
</dbReference>
<dbReference type="GO" id="GO:0015220">
    <property type="term" value="F:choline transmembrane transporter activity"/>
    <property type="evidence" value="ECO:0007669"/>
    <property type="project" value="TreeGrafter"/>
</dbReference>
<dbReference type="GO" id="GO:0015606">
    <property type="term" value="F:spermidine transmembrane transporter activity"/>
    <property type="evidence" value="ECO:0007669"/>
    <property type="project" value="UniProtKB-UniRule"/>
</dbReference>
<dbReference type="GO" id="GO:0031460">
    <property type="term" value="P:glycine betaine transport"/>
    <property type="evidence" value="ECO:0007669"/>
    <property type="project" value="TreeGrafter"/>
</dbReference>
<dbReference type="FunFam" id="1.10.3730.20:FF:000001">
    <property type="entry name" value="Quaternary ammonium compound resistance transporter SugE"/>
    <property type="match status" value="1"/>
</dbReference>
<dbReference type="Gene3D" id="1.10.3730.20">
    <property type="match status" value="1"/>
</dbReference>
<dbReference type="HAMAP" id="MF_01597">
    <property type="entry name" value="MdtI"/>
    <property type="match status" value="1"/>
</dbReference>
<dbReference type="InterPro" id="IPR000390">
    <property type="entry name" value="Small_drug/metabolite_transptr"/>
</dbReference>
<dbReference type="InterPro" id="IPR045324">
    <property type="entry name" value="Small_multidrug_res"/>
</dbReference>
<dbReference type="InterPro" id="IPR023737">
    <property type="entry name" value="Spermidine_export_MdtI"/>
</dbReference>
<dbReference type="NCBIfam" id="NF007934">
    <property type="entry name" value="PRK10650.1"/>
    <property type="match status" value="1"/>
</dbReference>
<dbReference type="PANTHER" id="PTHR30561">
    <property type="entry name" value="SMR FAMILY PROTON-DEPENDENT DRUG EFFLUX TRANSPORTER SUGE"/>
    <property type="match status" value="1"/>
</dbReference>
<dbReference type="PANTHER" id="PTHR30561:SF6">
    <property type="entry name" value="SPERMIDINE EXPORT PROTEIN MDTI"/>
    <property type="match status" value="1"/>
</dbReference>
<dbReference type="Pfam" id="PF00893">
    <property type="entry name" value="Multi_Drug_Res"/>
    <property type="match status" value="1"/>
</dbReference>
<dbReference type="SUPFAM" id="SSF103481">
    <property type="entry name" value="Multidrug resistance efflux transporter EmrE"/>
    <property type="match status" value="1"/>
</dbReference>
<name>MDTI_SALAR</name>
<feature type="chain" id="PRO_0000331144" description="Spermidine export protein MdtI">
    <location>
        <begin position="1"/>
        <end position="109"/>
    </location>
</feature>
<feature type="transmembrane region" description="Helical" evidence="1">
    <location>
        <begin position="6"/>
        <end position="26"/>
    </location>
</feature>
<feature type="transmembrane region" description="Helical" evidence="1">
    <location>
        <begin position="36"/>
        <end position="56"/>
    </location>
</feature>
<feature type="transmembrane region" description="Helical" evidence="1">
    <location>
        <begin position="64"/>
        <end position="84"/>
    </location>
</feature>
<feature type="transmembrane region" description="Helical" evidence="1">
    <location>
        <begin position="88"/>
        <end position="108"/>
    </location>
</feature>